<feature type="chain" id="PRO_0000337641" description="3-(3-hydroxy-phenyl)propionate/3-hydroxycinnamic acid hydroxylase">
    <location>
        <begin position="1"/>
        <end position="569"/>
    </location>
</feature>
<feature type="binding site" evidence="1">
    <location>
        <begin position="12"/>
        <end position="41"/>
    </location>
    <ligand>
        <name>FAD</name>
        <dbReference type="ChEBI" id="CHEBI:57692"/>
    </ligand>
</feature>
<feature type="binding site" evidence="1">
    <location>
        <begin position="277"/>
        <end position="287"/>
    </location>
    <ligand>
        <name>FAD</name>
        <dbReference type="ChEBI" id="CHEBI:57692"/>
    </ligand>
</feature>
<reference key="1">
    <citation type="submission" date="2006-12" db="EMBL/GenBank/DDBJ databases">
        <title>Complete sequence of Mycobacterium vanbaalenii PYR-1.</title>
        <authorList>
            <consortium name="US DOE Joint Genome Institute"/>
            <person name="Copeland A."/>
            <person name="Lucas S."/>
            <person name="Lapidus A."/>
            <person name="Barry K."/>
            <person name="Detter J.C."/>
            <person name="Glavina del Rio T."/>
            <person name="Hammon N."/>
            <person name="Israni S."/>
            <person name="Dalin E."/>
            <person name="Tice H."/>
            <person name="Pitluck S."/>
            <person name="Singan V."/>
            <person name="Schmutz J."/>
            <person name="Larimer F."/>
            <person name="Land M."/>
            <person name="Hauser L."/>
            <person name="Kyrpides N."/>
            <person name="Anderson I.J."/>
            <person name="Miller C."/>
            <person name="Richardson P."/>
        </authorList>
    </citation>
    <scope>NUCLEOTIDE SEQUENCE [LARGE SCALE GENOMIC DNA]</scope>
    <source>
        <strain>DSM 7251 / JCM 13017 / BCRC 16820 / KCTC 9966 / NRRL B-24157 / PYR-1</strain>
    </source>
</reference>
<name>MHPA_MYCVP</name>
<evidence type="ECO:0000255" key="1">
    <source>
        <dbReference type="HAMAP-Rule" id="MF_01652"/>
    </source>
</evidence>
<proteinExistence type="inferred from homology"/>
<keyword id="KW-0058">Aromatic hydrocarbons catabolism</keyword>
<keyword id="KW-0274">FAD</keyword>
<keyword id="KW-0285">Flavoprotein</keyword>
<keyword id="KW-0520">NAD</keyword>
<keyword id="KW-0560">Oxidoreductase</keyword>
<accession>A1TCX2</accession>
<comment type="function">
    <text evidence="1">Catalyzes the insertion of one atom of molecular oxygen into position 2 of the phenyl ring of 3-(3-hydroxyphenyl)propionate (3-HPP) and hydroxycinnamic acid (3HCI).</text>
</comment>
<comment type="catalytic activity">
    <reaction evidence="1">
        <text>3-(3-hydroxyphenyl)propanoate + NADH + O2 + H(+) = 3-(2,3-dihydroxyphenyl)propanoate + NAD(+) + H2O</text>
        <dbReference type="Rhea" id="RHEA:24785"/>
        <dbReference type="ChEBI" id="CHEBI:15377"/>
        <dbReference type="ChEBI" id="CHEBI:15378"/>
        <dbReference type="ChEBI" id="CHEBI:15379"/>
        <dbReference type="ChEBI" id="CHEBI:46951"/>
        <dbReference type="ChEBI" id="CHEBI:57277"/>
        <dbReference type="ChEBI" id="CHEBI:57540"/>
        <dbReference type="ChEBI" id="CHEBI:57945"/>
        <dbReference type="EC" id="1.14.13.127"/>
    </reaction>
</comment>
<comment type="catalytic activity">
    <reaction evidence="1">
        <text>(2E)-3-(3-hydroxyphenyl)prop-2-enoate + NADH + O2 + H(+) = (2E)-3-(2,3-dihydroxyphenyl)prop-2-enoate + NAD(+) + H2O</text>
        <dbReference type="Rhea" id="RHEA:27846"/>
        <dbReference type="ChEBI" id="CHEBI:15377"/>
        <dbReference type="ChEBI" id="CHEBI:15378"/>
        <dbReference type="ChEBI" id="CHEBI:15379"/>
        <dbReference type="ChEBI" id="CHEBI:47928"/>
        <dbReference type="ChEBI" id="CHEBI:57540"/>
        <dbReference type="ChEBI" id="CHEBI:57945"/>
        <dbReference type="ChEBI" id="CHEBI:58642"/>
        <dbReference type="EC" id="1.14.13.127"/>
    </reaction>
</comment>
<comment type="cofactor">
    <cofactor evidence="1">
        <name>FAD</name>
        <dbReference type="ChEBI" id="CHEBI:57692"/>
    </cofactor>
</comment>
<comment type="pathway">
    <text evidence="1">Aromatic compound metabolism; 3-phenylpropanoate degradation.</text>
</comment>
<comment type="similarity">
    <text evidence="1">Belongs to the PheA/TfdB FAD monooxygenase family.</text>
</comment>
<dbReference type="EC" id="1.14.13.127" evidence="1"/>
<dbReference type="EMBL" id="CP000511">
    <property type="protein sequence ID" value="ABM15022.1"/>
    <property type="molecule type" value="Genomic_DNA"/>
</dbReference>
<dbReference type="RefSeq" id="WP_011781400.1">
    <property type="nucleotide sequence ID" value="NC_008726.1"/>
</dbReference>
<dbReference type="SMR" id="A1TCX2"/>
<dbReference type="STRING" id="350058.Mvan_4245"/>
<dbReference type="KEGG" id="mva:Mvan_4245"/>
<dbReference type="eggNOG" id="COG0654">
    <property type="taxonomic scope" value="Bacteria"/>
</dbReference>
<dbReference type="HOGENOM" id="CLU_009665_20_2_11"/>
<dbReference type="UniPathway" id="UPA00714"/>
<dbReference type="Proteomes" id="UP000009159">
    <property type="component" value="Chromosome"/>
</dbReference>
<dbReference type="GO" id="GO:0008688">
    <property type="term" value="F:3-(3-hydroxyphenyl)propionate hydroxylase activity"/>
    <property type="evidence" value="ECO:0007669"/>
    <property type="project" value="UniProtKB-UniRule"/>
</dbReference>
<dbReference type="GO" id="GO:0071949">
    <property type="term" value="F:FAD binding"/>
    <property type="evidence" value="ECO:0007669"/>
    <property type="project" value="InterPro"/>
</dbReference>
<dbReference type="GO" id="GO:0019622">
    <property type="term" value="P:3-(3-hydroxy)phenylpropionate catabolic process"/>
    <property type="evidence" value="ECO:0007669"/>
    <property type="project" value="UniProtKB-UniRule"/>
</dbReference>
<dbReference type="GO" id="GO:0019380">
    <property type="term" value="P:3-phenylpropionate catabolic process"/>
    <property type="evidence" value="ECO:0007669"/>
    <property type="project" value="UniProtKB-UniPathway"/>
</dbReference>
<dbReference type="Gene3D" id="3.30.70.2450">
    <property type="match status" value="1"/>
</dbReference>
<dbReference type="Gene3D" id="3.50.50.60">
    <property type="entry name" value="FAD/NAD(P)-binding domain"/>
    <property type="match status" value="1"/>
</dbReference>
<dbReference type="HAMAP" id="MF_01652">
    <property type="entry name" value="MhpA"/>
    <property type="match status" value="1"/>
</dbReference>
<dbReference type="InterPro" id="IPR023786">
    <property type="entry name" value="3-HPP/3HCI_hydroxylase"/>
</dbReference>
<dbReference type="InterPro" id="IPR002938">
    <property type="entry name" value="FAD-bd"/>
</dbReference>
<dbReference type="InterPro" id="IPR036188">
    <property type="entry name" value="FAD/NAD-bd_sf"/>
</dbReference>
<dbReference type="InterPro" id="IPR050631">
    <property type="entry name" value="PheA/TfdB_FAD_monoxygenase"/>
</dbReference>
<dbReference type="NCBIfam" id="NF004828">
    <property type="entry name" value="PRK06183.1-2"/>
    <property type="match status" value="1"/>
</dbReference>
<dbReference type="NCBIfam" id="NF004829">
    <property type="entry name" value="PRK06183.1-3"/>
    <property type="match status" value="1"/>
</dbReference>
<dbReference type="NCBIfam" id="NF004831">
    <property type="entry name" value="PRK06183.1-5"/>
    <property type="match status" value="1"/>
</dbReference>
<dbReference type="PANTHER" id="PTHR43476">
    <property type="entry name" value="3-(3-HYDROXY-PHENYL)PROPIONATE/3-HYDROXYCINNAMIC ACID HYDROXYLASE"/>
    <property type="match status" value="1"/>
</dbReference>
<dbReference type="PANTHER" id="PTHR43476:SF3">
    <property type="entry name" value="FAD-BINDING MONOOXYGENASE"/>
    <property type="match status" value="1"/>
</dbReference>
<dbReference type="Pfam" id="PF01494">
    <property type="entry name" value="FAD_binding_3"/>
    <property type="match status" value="1"/>
</dbReference>
<dbReference type="PRINTS" id="PR00420">
    <property type="entry name" value="RNGMNOXGNASE"/>
</dbReference>
<dbReference type="SUPFAM" id="SSF51905">
    <property type="entry name" value="FAD/NAD(P)-binding domain"/>
    <property type="match status" value="1"/>
</dbReference>
<organism>
    <name type="scientific">Mycolicibacterium vanbaalenii (strain DSM 7251 / JCM 13017 / BCRC 16820 / KCTC 9966 / NRRL B-24157 / PYR-1)</name>
    <name type="common">Mycobacterium vanbaalenii</name>
    <dbReference type="NCBI Taxonomy" id="350058"/>
    <lineage>
        <taxon>Bacteria</taxon>
        <taxon>Bacillati</taxon>
        <taxon>Actinomycetota</taxon>
        <taxon>Actinomycetes</taxon>
        <taxon>Mycobacteriales</taxon>
        <taxon>Mycobacteriaceae</taxon>
        <taxon>Mycolicibacterium</taxon>
    </lineage>
</organism>
<sequence length="569" mass="62286">MTAPSGSTPDVDVVVVGAGPSGLTLANILGLQGVATLVVDERDTLIDYPRGVGLDDESLRTFQAIGLVERVLPHTVPNQILRFFDADRRLLAEMAPPDARFGWPKRNGFVQPLVDAELFGGLERFDHVEVRFDHRMQSCSETAGGVTVTFDGDRDPVRARYVVGCDGGRSTTRRQMGVSFDGTTSSTRWLVVDVANDPLGHPNSEVGADPARPYVSISIAHGIRRFEFMIHPDETDEQADDPAFVRRMLGQRVPYPERVDIIRHRVYTHHSRIAGSFRKGRLMLAGDAAHLMPVWQGQGYNSGIRDAANLGWKLAAVVNGQADDALLDTYDLERRKHARAMIDLSTMVGKVISPTNRGLAALRDRVIHAASVVPTLKRYILEMRFKPMPRYQQGAVYHDAQPSPTSPTGTLFIQPRVDTREEFNVLLDDVLGPGFAVVCWSNNLRAVLGDEAFDRWKGLGARFVEARPMTQLHWPGYDDADVEVVGDRTGALKKWFDVSTDSVLFVRPDRCIAGACIAQRAPEVSTALFAVLHLTREGGAGSHGEKSDGTVLHVAQSAAEPSGTSAGTP</sequence>
<protein>
    <recommendedName>
        <fullName evidence="1">3-(3-hydroxy-phenyl)propionate/3-hydroxycinnamic acid hydroxylase</fullName>
        <shortName evidence="1">3-HCI hydroxylase</shortName>
        <shortName evidence="1">3-HPP hydroxylase</shortName>
        <ecNumber evidence="1">1.14.13.127</ecNumber>
    </recommendedName>
</protein>
<gene>
    <name evidence="1" type="primary">mhpA</name>
    <name type="ordered locus">Mvan_4245</name>
</gene>